<protein>
    <recommendedName>
        <fullName>Uncharacterized protein RT0064</fullName>
    </recommendedName>
</protein>
<reference key="1">
    <citation type="journal article" date="2004" name="J. Bacteriol.">
        <title>Complete genome sequence of Rickettsia typhi and comparison with sequences of other Rickettsiae.</title>
        <authorList>
            <person name="McLeod M.P."/>
            <person name="Qin X."/>
            <person name="Karpathy S.E."/>
            <person name="Gioia J."/>
            <person name="Highlander S.K."/>
            <person name="Fox G.E."/>
            <person name="McNeill T.Z."/>
            <person name="Jiang H."/>
            <person name="Muzny D."/>
            <person name="Jacob L.S."/>
            <person name="Hawes A.C."/>
            <person name="Sodergren E."/>
            <person name="Gill R."/>
            <person name="Hume J."/>
            <person name="Morgan M."/>
            <person name="Fan G."/>
            <person name="Amin A.G."/>
            <person name="Gibbs R.A."/>
            <person name="Hong C."/>
            <person name="Yu X.-J."/>
            <person name="Walker D.H."/>
            <person name="Weinstock G.M."/>
        </authorList>
    </citation>
    <scope>NUCLEOTIDE SEQUENCE [LARGE SCALE GENOMIC DNA]</scope>
    <source>
        <strain>ATCC VR-144 / Wilmington</strain>
    </source>
</reference>
<accession>Q68XU2</accession>
<organism>
    <name type="scientific">Rickettsia typhi (strain ATCC VR-144 / Wilmington)</name>
    <dbReference type="NCBI Taxonomy" id="257363"/>
    <lineage>
        <taxon>Bacteria</taxon>
        <taxon>Pseudomonadati</taxon>
        <taxon>Pseudomonadota</taxon>
        <taxon>Alphaproteobacteria</taxon>
        <taxon>Rickettsiales</taxon>
        <taxon>Rickettsiaceae</taxon>
        <taxon>Rickettsieae</taxon>
        <taxon>Rickettsia</taxon>
        <taxon>typhus group</taxon>
    </lineage>
</organism>
<gene>
    <name type="ordered locus">RT0064</name>
</gene>
<proteinExistence type="inferred from homology"/>
<evidence type="ECO:0000255" key="1"/>
<keyword id="KW-0732">Signal</keyword>
<feature type="signal peptide" evidence="1">
    <location>
        <begin position="1"/>
        <end position="19"/>
    </location>
</feature>
<feature type="chain" id="PRO_0000260172" description="Uncharacterized protein RT0064">
    <location>
        <begin position="20"/>
        <end position="440"/>
    </location>
</feature>
<sequence length="440" mass="48290">MKKLLLAASIIYFASVSLAEEKTTPFISNSDTKIKLEGFYLFESGYIKQDHLILFDKNVTDNRKKLGFDTEVAFAATITKTIDDVIAGAKIVLQPTTKAKTTASYNGSHIFIETSYGKVELGSPVDASAQLRVTGNKVTAGTGGWYRYALLDGQYMRYNALKPDFDTSVNFYLESYSNSFDQVNEKTEKARRLNFFTPKMKGFQAGISYTPDTANTGGNKNINNLTLQSSGRNGISASRTGIKTLSIANGEIMTINQNIRDAFSAGLTYEHAISEDADLKLSMTGEYGKPARRLIHAKVDGTTKAIEVLNTYKLSNLKAYNLGAVFTYGNFSCGASYGNLGKSLTAKEYYKVGRNTYYYNGAVAYGQGPIKTSLAYLKTSRYKNTVNAVSLATEYKIMPGLLPYAEISHFQAKGKPVYYPEAPSKTTRGTVGLIGTKLKF</sequence>
<name>Y064_RICTY</name>
<dbReference type="EMBL" id="AE017197">
    <property type="protein sequence ID" value="AAU03550.1"/>
    <property type="molecule type" value="Genomic_DNA"/>
</dbReference>
<dbReference type="RefSeq" id="WP_011190537.1">
    <property type="nucleotide sequence ID" value="NC_006142.1"/>
</dbReference>
<dbReference type="KEGG" id="rty:RT0064"/>
<dbReference type="eggNOG" id="COG3203">
    <property type="taxonomic scope" value="Bacteria"/>
</dbReference>
<dbReference type="HOGENOM" id="CLU_628327_0_0_5"/>
<dbReference type="OrthoDB" id="6758483at2"/>
<dbReference type="Proteomes" id="UP000000604">
    <property type="component" value="Chromosome"/>
</dbReference>
<dbReference type="GO" id="GO:0016020">
    <property type="term" value="C:membrane"/>
    <property type="evidence" value="ECO:0007669"/>
    <property type="project" value="InterPro"/>
</dbReference>
<dbReference type="GO" id="GO:0015288">
    <property type="term" value="F:porin activity"/>
    <property type="evidence" value="ECO:0007669"/>
    <property type="project" value="InterPro"/>
</dbReference>
<dbReference type="Gene3D" id="2.40.160.10">
    <property type="entry name" value="Porin"/>
    <property type="match status" value="1"/>
</dbReference>
<dbReference type="InterPro" id="IPR033900">
    <property type="entry name" value="Gram_neg_porin_domain"/>
</dbReference>
<dbReference type="InterPro" id="IPR023614">
    <property type="entry name" value="Porin_dom_sf"/>
</dbReference>
<dbReference type="Pfam" id="PF13609">
    <property type="entry name" value="Porin_4"/>
    <property type="match status" value="1"/>
</dbReference>
<dbReference type="SUPFAM" id="SSF56935">
    <property type="entry name" value="Porins"/>
    <property type="match status" value="1"/>
</dbReference>